<geneLocation type="chloroplast"/>
<dbReference type="EMBL" id="EU189133">
    <property type="protein sequence ID" value="ABW20551.1"/>
    <property type="molecule type" value="Genomic_DNA"/>
</dbReference>
<dbReference type="RefSeq" id="YP_001531206.1">
    <property type="nucleotide sequence ID" value="NC_009949.1"/>
</dbReference>
<dbReference type="SMR" id="A8W3H6"/>
<dbReference type="GeneID" id="5714814"/>
<dbReference type="GO" id="GO:0009535">
    <property type="term" value="C:chloroplast thylakoid membrane"/>
    <property type="evidence" value="ECO:0007669"/>
    <property type="project" value="UniProtKB-SubCell"/>
</dbReference>
<dbReference type="GO" id="GO:0045259">
    <property type="term" value="C:proton-transporting ATP synthase complex"/>
    <property type="evidence" value="ECO:0007669"/>
    <property type="project" value="UniProtKB-KW"/>
</dbReference>
<dbReference type="GO" id="GO:0046933">
    <property type="term" value="F:proton-transporting ATP synthase activity, rotational mechanism"/>
    <property type="evidence" value="ECO:0007669"/>
    <property type="project" value="UniProtKB-UniRule"/>
</dbReference>
<dbReference type="CDD" id="cd06503">
    <property type="entry name" value="ATP-synt_Fo_b"/>
    <property type="match status" value="1"/>
</dbReference>
<dbReference type="HAMAP" id="MF_01398">
    <property type="entry name" value="ATP_synth_b_bprime"/>
    <property type="match status" value="1"/>
</dbReference>
<dbReference type="InterPro" id="IPR002146">
    <property type="entry name" value="ATP_synth_b/b'su_bac/chlpt"/>
</dbReference>
<dbReference type="PANTHER" id="PTHR34264">
    <property type="entry name" value="ATP SYNTHASE SUBUNIT B, CHLOROPLASTIC"/>
    <property type="match status" value="1"/>
</dbReference>
<dbReference type="PANTHER" id="PTHR34264:SF3">
    <property type="entry name" value="ATP SYNTHASE SUBUNIT B, CHLOROPLASTIC"/>
    <property type="match status" value="1"/>
</dbReference>
<dbReference type="Pfam" id="PF00430">
    <property type="entry name" value="ATP-synt_B"/>
    <property type="match status" value="1"/>
</dbReference>
<keyword id="KW-0066">ATP synthesis</keyword>
<keyword id="KW-0138">CF(0)</keyword>
<keyword id="KW-0150">Chloroplast</keyword>
<keyword id="KW-0375">Hydrogen ion transport</keyword>
<keyword id="KW-0406">Ion transport</keyword>
<keyword id="KW-0472">Membrane</keyword>
<keyword id="KW-0934">Plastid</keyword>
<keyword id="KW-0793">Thylakoid</keyword>
<keyword id="KW-0812">Transmembrane</keyword>
<keyword id="KW-1133">Transmembrane helix</keyword>
<keyword id="KW-0813">Transport</keyword>
<comment type="function">
    <text evidence="1">F(1)F(0) ATP synthase produces ATP from ADP in the presence of a proton or sodium gradient. F-type ATPases consist of two structural domains, F(1) containing the extramembraneous catalytic core and F(0) containing the membrane proton channel, linked together by a central stalk and a peripheral stalk. During catalysis, ATP synthesis in the catalytic domain of F(1) is coupled via a rotary mechanism of the central stalk subunits to proton translocation.</text>
</comment>
<comment type="function">
    <text evidence="1">Component of the F(0) channel, it forms part of the peripheral stalk, linking F(1) to F(0).</text>
</comment>
<comment type="subunit">
    <text evidence="1">F-type ATPases have 2 components, F(1) - the catalytic core - and F(0) - the membrane proton channel. F(1) has five subunits: alpha(3), beta(3), gamma(1), delta(1), epsilon(1). F(0) has four main subunits: a(1), b(1), b'(1) and c(10-14). The alpha and beta chains form an alternating ring which encloses part of the gamma chain. F(1) is attached to F(0) by a central stalk formed by the gamma and epsilon chains, while a peripheral stalk is formed by the delta, b and b' chains.</text>
</comment>
<comment type="subcellular location">
    <subcellularLocation>
        <location evidence="1">Plastid</location>
        <location evidence="1">Chloroplast thylakoid membrane</location>
        <topology evidence="1">Single-pass membrane protein</topology>
    </subcellularLocation>
</comment>
<comment type="miscellaneous">
    <text>In plastids the F-type ATPase is also known as CF(1)CF(0).</text>
</comment>
<comment type="similarity">
    <text evidence="1">Belongs to the ATPase B chain family.</text>
</comment>
<feature type="chain" id="PRO_0000368926" description="ATP synthase subunit b, chloroplastic">
    <location>
        <begin position="1"/>
        <end position="180"/>
    </location>
</feature>
<feature type="transmembrane region" description="Helical" evidence="1">
    <location>
        <begin position="28"/>
        <end position="48"/>
    </location>
</feature>
<sequence length="180" mass="20615">MNDVTYYLISLASQSPAGSFGLNTNNLVTTLINIGVVLCLLIIFGKGFLRNFLDTRKNKIVNTMQISDELYSSAVEKLEKAQARLCKVENEAKQLRVTGYSEIEHEKLNLINSTYKTLERLEKKKKETCSFEQQQAFNDVRQWVLQQTLQRVLKTLNGSFNPELHLRTIRINISMLGTLK</sequence>
<protein>
    <recommendedName>
        <fullName evidence="1">ATP synthase subunit b, chloroplastic</fullName>
    </recommendedName>
    <alternativeName>
        <fullName evidence="1">ATP synthase F(0) sector subunit b</fullName>
    </alternativeName>
    <alternativeName>
        <fullName evidence="1">ATPase subunit I</fullName>
    </alternativeName>
</protein>
<accession>A8W3H6</accession>
<reference key="1">
    <citation type="journal article" date="2007" name="BMC Plant Biol.">
        <title>Complete plastid genome sequences suggest strong selection for retention of photosynthetic genes in the parasitic plant genus Cuscuta.</title>
        <authorList>
            <person name="McNeal J.R."/>
            <person name="Kuehl J.V."/>
            <person name="Boore J.L."/>
            <person name="dePamphilis C.W."/>
        </authorList>
    </citation>
    <scope>NUCLEOTIDE SEQUENCE [LARGE SCALE GENOMIC DNA]</scope>
</reference>
<name>ATPF_CUSOB</name>
<evidence type="ECO:0000255" key="1">
    <source>
        <dbReference type="HAMAP-Rule" id="MF_01398"/>
    </source>
</evidence>
<proteinExistence type="inferred from homology"/>
<gene>
    <name evidence="1" type="primary">atpF</name>
</gene>
<organism>
    <name type="scientific">Cuscuta obtusiflora</name>
    <name type="common">Peruvian dodder</name>
    <dbReference type="NCBI Taxonomy" id="437280"/>
    <lineage>
        <taxon>Eukaryota</taxon>
        <taxon>Viridiplantae</taxon>
        <taxon>Streptophyta</taxon>
        <taxon>Embryophyta</taxon>
        <taxon>Tracheophyta</taxon>
        <taxon>Spermatophyta</taxon>
        <taxon>Magnoliopsida</taxon>
        <taxon>eudicotyledons</taxon>
        <taxon>Gunneridae</taxon>
        <taxon>Pentapetalae</taxon>
        <taxon>asterids</taxon>
        <taxon>lamiids</taxon>
        <taxon>Solanales</taxon>
        <taxon>Convolvulaceae</taxon>
        <taxon>Cuscuteae</taxon>
        <taxon>Cuscuta</taxon>
        <taxon>Cuscuta subgen. Grammica</taxon>
        <taxon>Cuscuta sect. Cleistogrammica</taxon>
    </lineage>
</organism>